<reference key="1">
    <citation type="journal article" date="2003" name="Nature">
        <title>The genome sequence of Bacillus anthracis Ames and comparison to closely related bacteria.</title>
        <authorList>
            <person name="Read T.D."/>
            <person name="Peterson S.N."/>
            <person name="Tourasse N.J."/>
            <person name="Baillie L.W."/>
            <person name="Paulsen I.T."/>
            <person name="Nelson K.E."/>
            <person name="Tettelin H."/>
            <person name="Fouts D.E."/>
            <person name="Eisen J.A."/>
            <person name="Gill S.R."/>
            <person name="Holtzapple E.K."/>
            <person name="Okstad O.A."/>
            <person name="Helgason E."/>
            <person name="Rilstone J."/>
            <person name="Wu M."/>
            <person name="Kolonay J.F."/>
            <person name="Beanan M.J."/>
            <person name="Dodson R.J."/>
            <person name="Brinkac L.M."/>
            <person name="Gwinn M.L."/>
            <person name="DeBoy R.T."/>
            <person name="Madpu R."/>
            <person name="Daugherty S.C."/>
            <person name="Durkin A.S."/>
            <person name="Haft D.H."/>
            <person name="Nelson W.C."/>
            <person name="Peterson J.D."/>
            <person name="Pop M."/>
            <person name="Khouri H.M."/>
            <person name="Radune D."/>
            <person name="Benton J.L."/>
            <person name="Mahamoud Y."/>
            <person name="Jiang L."/>
            <person name="Hance I.R."/>
            <person name="Weidman J.F."/>
            <person name="Berry K.J."/>
            <person name="Plaut R.D."/>
            <person name="Wolf A.M."/>
            <person name="Watkins K.L."/>
            <person name="Nierman W.C."/>
            <person name="Hazen A."/>
            <person name="Cline R.T."/>
            <person name="Redmond C."/>
            <person name="Thwaite J.E."/>
            <person name="White O."/>
            <person name="Salzberg S.L."/>
            <person name="Thomason B."/>
            <person name="Friedlander A.M."/>
            <person name="Koehler T.M."/>
            <person name="Hanna P.C."/>
            <person name="Kolstoe A.-B."/>
            <person name="Fraser C.M."/>
        </authorList>
    </citation>
    <scope>NUCLEOTIDE SEQUENCE [LARGE SCALE GENOMIC DNA]</scope>
    <source>
        <strain>Ames / isolate Porton</strain>
    </source>
</reference>
<reference key="2">
    <citation type="journal article" date="2009" name="J. Bacteriol.">
        <title>The complete genome sequence of Bacillus anthracis Ames 'Ancestor'.</title>
        <authorList>
            <person name="Ravel J."/>
            <person name="Jiang L."/>
            <person name="Stanley S.T."/>
            <person name="Wilson M.R."/>
            <person name="Decker R.S."/>
            <person name="Read T.D."/>
            <person name="Worsham P."/>
            <person name="Keim P.S."/>
            <person name="Salzberg S.L."/>
            <person name="Fraser-Liggett C.M."/>
            <person name="Rasko D.A."/>
        </authorList>
    </citation>
    <scope>NUCLEOTIDE SEQUENCE [LARGE SCALE GENOMIC DNA]</scope>
    <source>
        <strain>Ames ancestor</strain>
    </source>
</reference>
<reference key="3">
    <citation type="submission" date="2004-01" db="EMBL/GenBank/DDBJ databases">
        <title>Complete genome sequence of Bacillus anthracis Sterne.</title>
        <authorList>
            <person name="Brettin T.S."/>
            <person name="Bruce D."/>
            <person name="Challacombe J.F."/>
            <person name="Gilna P."/>
            <person name="Han C."/>
            <person name="Hill K."/>
            <person name="Hitchcock P."/>
            <person name="Jackson P."/>
            <person name="Keim P."/>
            <person name="Longmire J."/>
            <person name="Lucas S."/>
            <person name="Okinaka R."/>
            <person name="Richardson P."/>
            <person name="Rubin E."/>
            <person name="Tice H."/>
        </authorList>
    </citation>
    <scope>NUCLEOTIDE SEQUENCE [LARGE SCALE GENOMIC DNA]</scope>
    <source>
        <strain>Sterne</strain>
    </source>
</reference>
<protein>
    <recommendedName>
        <fullName evidence="1">33 kDa chaperonin</fullName>
    </recommendedName>
    <alternativeName>
        <fullName evidence="1">Heat shock protein 33 homolog</fullName>
        <shortName evidence="1">HSP33</shortName>
    </alternativeName>
</protein>
<evidence type="ECO:0000255" key="1">
    <source>
        <dbReference type="HAMAP-Rule" id="MF_00117"/>
    </source>
</evidence>
<accession>Q81VX3</accession>
<accession>Q6I4X7</accession>
<accession>Q6KYM1</accession>
<feature type="chain" id="PRO_0000192163" description="33 kDa chaperonin">
    <location>
        <begin position="1"/>
        <end position="291"/>
    </location>
</feature>
<feature type="disulfide bond" description="Redox-active" evidence="1">
    <location>
        <begin position="237"/>
        <end position="239"/>
    </location>
</feature>
<feature type="disulfide bond" description="Redox-active" evidence="1">
    <location>
        <begin position="270"/>
        <end position="273"/>
    </location>
</feature>
<name>HSLO_BACAN</name>
<dbReference type="EMBL" id="AE016879">
    <property type="protein sequence ID" value="AAP24121.1"/>
    <property type="molecule type" value="Genomic_DNA"/>
</dbReference>
<dbReference type="EMBL" id="AE017334">
    <property type="protein sequence ID" value="AAT29144.1"/>
    <property type="molecule type" value="Genomic_DNA"/>
</dbReference>
<dbReference type="EMBL" id="AE017225">
    <property type="protein sequence ID" value="AAT52404.1"/>
    <property type="molecule type" value="Genomic_DNA"/>
</dbReference>
<dbReference type="RefSeq" id="NP_842635.1">
    <property type="nucleotide sequence ID" value="NC_003997.3"/>
</dbReference>
<dbReference type="RefSeq" id="WP_000656366.1">
    <property type="nucleotide sequence ID" value="NZ_WXXJ01000031.1"/>
</dbReference>
<dbReference type="RefSeq" id="YP_026353.1">
    <property type="nucleotide sequence ID" value="NC_005945.1"/>
</dbReference>
<dbReference type="SMR" id="Q81VX3"/>
<dbReference type="IntAct" id="Q81VX3">
    <property type="interactions" value="1"/>
</dbReference>
<dbReference type="STRING" id="261594.GBAA_0066"/>
<dbReference type="DNASU" id="1084237"/>
<dbReference type="GeneID" id="75083333"/>
<dbReference type="KEGG" id="ban:BA_0066"/>
<dbReference type="KEGG" id="bar:GBAA_0066"/>
<dbReference type="KEGG" id="bat:BAS0066"/>
<dbReference type="PATRIC" id="fig|198094.11.peg.63"/>
<dbReference type="eggNOG" id="COG1281">
    <property type="taxonomic scope" value="Bacteria"/>
</dbReference>
<dbReference type="HOGENOM" id="CLU_054493_1_0_9"/>
<dbReference type="OMA" id="DMQCECC"/>
<dbReference type="OrthoDB" id="9776534at2"/>
<dbReference type="Proteomes" id="UP000000427">
    <property type="component" value="Chromosome"/>
</dbReference>
<dbReference type="Proteomes" id="UP000000594">
    <property type="component" value="Chromosome"/>
</dbReference>
<dbReference type="GO" id="GO:0005737">
    <property type="term" value="C:cytoplasm"/>
    <property type="evidence" value="ECO:0007669"/>
    <property type="project" value="UniProtKB-SubCell"/>
</dbReference>
<dbReference type="GO" id="GO:0044183">
    <property type="term" value="F:protein folding chaperone"/>
    <property type="evidence" value="ECO:0007669"/>
    <property type="project" value="TreeGrafter"/>
</dbReference>
<dbReference type="GO" id="GO:0051082">
    <property type="term" value="F:unfolded protein binding"/>
    <property type="evidence" value="ECO:0007669"/>
    <property type="project" value="UniProtKB-UniRule"/>
</dbReference>
<dbReference type="GO" id="GO:0042026">
    <property type="term" value="P:protein refolding"/>
    <property type="evidence" value="ECO:0007669"/>
    <property type="project" value="TreeGrafter"/>
</dbReference>
<dbReference type="CDD" id="cd00498">
    <property type="entry name" value="Hsp33"/>
    <property type="match status" value="1"/>
</dbReference>
<dbReference type="Gene3D" id="3.55.30.10">
    <property type="entry name" value="Hsp33 domain"/>
    <property type="match status" value="1"/>
</dbReference>
<dbReference type="Gene3D" id="3.90.1280.10">
    <property type="entry name" value="HSP33 redox switch-like"/>
    <property type="match status" value="1"/>
</dbReference>
<dbReference type="HAMAP" id="MF_00117">
    <property type="entry name" value="HslO"/>
    <property type="match status" value="1"/>
</dbReference>
<dbReference type="InterPro" id="IPR000397">
    <property type="entry name" value="Heat_shock_Hsp33"/>
</dbReference>
<dbReference type="InterPro" id="IPR016154">
    <property type="entry name" value="Heat_shock_Hsp33_C"/>
</dbReference>
<dbReference type="InterPro" id="IPR016153">
    <property type="entry name" value="Heat_shock_Hsp33_N"/>
</dbReference>
<dbReference type="NCBIfam" id="NF001033">
    <property type="entry name" value="PRK00114.1"/>
    <property type="match status" value="1"/>
</dbReference>
<dbReference type="PANTHER" id="PTHR30111">
    <property type="entry name" value="33 KDA CHAPERONIN"/>
    <property type="match status" value="1"/>
</dbReference>
<dbReference type="PANTHER" id="PTHR30111:SF1">
    <property type="entry name" value="33 KDA CHAPERONIN"/>
    <property type="match status" value="1"/>
</dbReference>
<dbReference type="Pfam" id="PF01430">
    <property type="entry name" value="HSP33"/>
    <property type="match status" value="1"/>
</dbReference>
<dbReference type="PIRSF" id="PIRSF005261">
    <property type="entry name" value="Heat_shock_Hsp33"/>
    <property type="match status" value="1"/>
</dbReference>
<dbReference type="SUPFAM" id="SSF64397">
    <property type="entry name" value="Hsp33 domain"/>
    <property type="match status" value="1"/>
</dbReference>
<dbReference type="SUPFAM" id="SSF118352">
    <property type="entry name" value="HSP33 redox switch-like"/>
    <property type="match status" value="1"/>
</dbReference>
<organism>
    <name type="scientific">Bacillus anthracis</name>
    <dbReference type="NCBI Taxonomy" id="1392"/>
    <lineage>
        <taxon>Bacteria</taxon>
        <taxon>Bacillati</taxon>
        <taxon>Bacillota</taxon>
        <taxon>Bacilli</taxon>
        <taxon>Bacillales</taxon>
        <taxon>Bacillaceae</taxon>
        <taxon>Bacillus</taxon>
        <taxon>Bacillus cereus group</taxon>
    </lineage>
</organism>
<comment type="function">
    <text evidence="1">Redox regulated molecular chaperone. Protects both thermally unfolding and oxidatively damaged proteins from irreversible aggregation. Plays an important role in the bacterial defense system toward oxidative stress.</text>
</comment>
<comment type="subcellular location">
    <subcellularLocation>
        <location evidence="1">Cytoplasm</location>
    </subcellularLocation>
</comment>
<comment type="PTM">
    <text evidence="1">Under oxidizing conditions two disulfide bonds are formed involving the reactive cysteines. Under reducing conditions zinc is bound to the reactive cysteines and the protein is inactive.</text>
</comment>
<comment type="similarity">
    <text evidence="1">Belongs to the HSP33 family.</text>
</comment>
<proteinExistence type="inferred from homology"/>
<keyword id="KW-0143">Chaperone</keyword>
<keyword id="KW-0963">Cytoplasm</keyword>
<keyword id="KW-1015">Disulfide bond</keyword>
<keyword id="KW-0676">Redox-active center</keyword>
<keyword id="KW-1185">Reference proteome</keyword>
<keyword id="KW-0862">Zinc</keyword>
<sequence>MKDYLVKALAFDGEVRAYSVRTTNTVSEAQRRHDTWRTASAALGRSLTAGTMMGAMLKGDQKLTIKVEGNGPIGPILVDAHANGDVRGYVTNPHVDFEGTEQGKLRVYQAVGTEGFVTVIKDIGMREPFIGQSPIVSGELGEDFTYYFAVSEQTPSSVGVGVLVNGDDSILAAGGFILQIMPGAQEETISFIEERLQKIPPVSTLIEQGLSPEELLYAVLGEDKVKVLETMDVQFNCTCSRERIESVLISLGKTELEQVREEEEETEVHCHFCNERYKFSKEDITNLIENL</sequence>
<gene>
    <name evidence="1" type="primary">hslO</name>
    <name type="ordered locus">BA_0066</name>
    <name type="ordered locus">GBAA_0066</name>
    <name type="ordered locus">BAS0066</name>
</gene>